<feature type="chain" id="PRO_1000097918" description="ATP-dependent Clp protease ATP-binding subunit ClpX">
    <location>
        <begin position="1"/>
        <end position="437"/>
    </location>
</feature>
<feature type="domain" description="ClpX-type ZB" evidence="2">
    <location>
        <begin position="1"/>
        <end position="52"/>
    </location>
</feature>
<feature type="binding site" evidence="2">
    <location>
        <position position="11"/>
    </location>
    <ligand>
        <name>Zn(2+)</name>
        <dbReference type="ChEBI" id="CHEBI:29105"/>
    </ligand>
</feature>
<feature type="binding site" evidence="2">
    <location>
        <position position="14"/>
    </location>
    <ligand>
        <name>Zn(2+)</name>
        <dbReference type="ChEBI" id="CHEBI:29105"/>
    </ligand>
</feature>
<feature type="binding site" evidence="2">
    <location>
        <position position="33"/>
    </location>
    <ligand>
        <name>Zn(2+)</name>
        <dbReference type="ChEBI" id="CHEBI:29105"/>
    </ligand>
</feature>
<feature type="binding site" evidence="2">
    <location>
        <position position="36"/>
    </location>
    <ligand>
        <name>Zn(2+)</name>
        <dbReference type="ChEBI" id="CHEBI:29105"/>
    </ligand>
</feature>
<feature type="binding site" evidence="1">
    <location>
        <begin position="119"/>
        <end position="126"/>
    </location>
    <ligand>
        <name>ATP</name>
        <dbReference type="ChEBI" id="CHEBI:30616"/>
    </ligand>
</feature>
<keyword id="KW-0067">ATP-binding</keyword>
<keyword id="KW-0143">Chaperone</keyword>
<keyword id="KW-0479">Metal-binding</keyword>
<keyword id="KW-0547">Nucleotide-binding</keyword>
<keyword id="KW-0862">Zinc</keyword>
<dbReference type="EMBL" id="CP000521">
    <property type="protein sequence ID" value="ABO10932.2"/>
    <property type="molecule type" value="Genomic_DNA"/>
</dbReference>
<dbReference type="RefSeq" id="WP_001289250.1">
    <property type="nucleotide sequence ID" value="NZ_CP053098.1"/>
</dbReference>
<dbReference type="SMR" id="A3M1Y8"/>
<dbReference type="GeneID" id="92892482"/>
<dbReference type="KEGG" id="acb:A1S_0477"/>
<dbReference type="HOGENOM" id="CLU_014218_8_2_6"/>
<dbReference type="GO" id="GO:0009376">
    <property type="term" value="C:HslUV protease complex"/>
    <property type="evidence" value="ECO:0007669"/>
    <property type="project" value="TreeGrafter"/>
</dbReference>
<dbReference type="GO" id="GO:0005524">
    <property type="term" value="F:ATP binding"/>
    <property type="evidence" value="ECO:0007669"/>
    <property type="project" value="UniProtKB-UniRule"/>
</dbReference>
<dbReference type="GO" id="GO:0016887">
    <property type="term" value="F:ATP hydrolysis activity"/>
    <property type="evidence" value="ECO:0007669"/>
    <property type="project" value="InterPro"/>
</dbReference>
<dbReference type="GO" id="GO:0140662">
    <property type="term" value="F:ATP-dependent protein folding chaperone"/>
    <property type="evidence" value="ECO:0007669"/>
    <property type="project" value="InterPro"/>
</dbReference>
<dbReference type="GO" id="GO:0046983">
    <property type="term" value="F:protein dimerization activity"/>
    <property type="evidence" value="ECO:0007669"/>
    <property type="project" value="InterPro"/>
</dbReference>
<dbReference type="GO" id="GO:0051082">
    <property type="term" value="F:unfolded protein binding"/>
    <property type="evidence" value="ECO:0007669"/>
    <property type="project" value="UniProtKB-UniRule"/>
</dbReference>
<dbReference type="GO" id="GO:0008270">
    <property type="term" value="F:zinc ion binding"/>
    <property type="evidence" value="ECO:0007669"/>
    <property type="project" value="InterPro"/>
</dbReference>
<dbReference type="GO" id="GO:0051301">
    <property type="term" value="P:cell division"/>
    <property type="evidence" value="ECO:0007669"/>
    <property type="project" value="TreeGrafter"/>
</dbReference>
<dbReference type="GO" id="GO:0051603">
    <property type="term" value="P:proteolysis involved in protein catabolic process"/>
    <property type="evidence" value="ECO:0007669"/>
    <property type="project" value="TreeGrafter"/>
</dbReference>
<dbReference type="CDD" id="cd19497">
    <property type="entry name" value="RecA-like_ClpX"/>
    <property type="match status" value="1"/>
</dbReference>
<dbReference type="FunFam" id="1.10.8.60:FF:000002">
    <property type="entry name" value="ATP-dependent Clp protease ATP-binding subunit ClpX"/>
    <property type="match status" value="1"/>
</dbReference>
<dbReference type="FunFam" id="3.40.50.300:FF:000005">
    <property type="entry name" value="ATP-dependent Clp protease ATP-binding subunit ClpX"/>
    <property type="match status" value="1"/>
</dbReference>
<dbReference type="Gene3D" id="1.10.8.60">
    <property type="match status" value="1"/>
</dbReference>
<dbReference type="Gene3D" id="6.20.220.10">
    <property type="entry name" value="ClpX chaperone, C4-type zinc finger domain"/>
    <property type="match status" value="1"/>
</dbReference>
<dbReference type="Gene3D" id="3.40.50.300">
    <property type="entry name" value="P-loop containing nucleotide triphosphate hydrolases"/>
    <property type="match status" value="1"/>
</dbReference>
<dbReference type="HAMAP" id="MF_00175">
    <property type="entry name" value="ClpX"/>
    <property type="match status" value="1"/>
</dbReference>
<dbReference type="InterPro" id="IPR003593">
    <property type="entry name" value="AAA+_ATPase"/>
</dbReference>
<dbReference type="InterPro" id="IPR050052">
    <property type="entry name" value="ATP-dep_Clp_protease_ClpX"/>
</dbReference>
<dbReference type="InterPro" id="IPR003959">
    <property type="entry name" value="ATPase_AAA_core"/>
</dbReference>
<dbReference type="InterPro" id="IPR019489">
    <property type="entry name" value="Clp_ATPase_C"/>
</dbReference>
<dbReference type="InterPro" id="IPR004487">
    <property type="entry name" value="Clp_protease_ATP-bd_su_ClpX"/>
</dbReference>
<dbReference type="InterPro" id="IPR046425">
    <property type="entry name" value="ClpX_bact"/>
</dbReference>
<dbReference type="InterPro" id="IPR027417">
    <property type="entry name" value="P-loop_NTPase"/>
</dbReference>
<dbReference type="InterPro" id="IPR010603">
    <property type="entry name" value="Znf_CppX_C4"/>
</dbReference>
<dbReference type="InterPro" id="IPR038366">
    <property type="entry name" value="Znf_CppX_C4_sf"/>
</dbReference>
<dbReference type="NCBIfam" id="TIGR00382">
    <property type="entry name" value="clpX"/>
    <property type="match status" value="1"/>
</dbReference>
<dbReference type="NCBIfam" id="NF003745">
    <property type="entry name" value="PRK05342.1"/>
    <property type="match status" value="1"/>
</dbReference>
<dbReference type="PANTHER" id="PTHR48102:SF7">
    <property type="entry name" value="ATP-DEPENDENT CLP PROTEASE ATP-BINDING SUBUNIT CLPX-LIKE, MITOCHONDRIAL"/>
    <property type="match status" value="1"/>
</dbReference>
<dbReference type="PANTHER" id="PTHR48102">
    <property type="entry name" value="ATP-DEPENDENT CLP PROTEASE ATP-BINDING SUBUNIT CLPX-LIKE, MITOCHONDRIAL-RELATED"/>
    <property type="match status" value="1"/>
</dbReference>
<dbReference type="Pfam" id="PF07724">
    <property type="entry name" value="AAA_2"/>
    <property type="match status" value="1"/>
</dbReference>
<dbReference type="Pfam" id="PF10431">
    <property type="entry name" value="ClpB_D2-small"/>
    <property type="match status" value="1"/>
</dbReference>
<dbReference type="Pfam" id="PF06689">
    <property type="entry name" value="zf-C4_ClpX"/>
    <property type="match status" value="1"/>
</dbReference>
<dbReference type="SMART" id="SM00382">
    <property type="entry name" value="AAA"/>
    <property type="match status" value="1"/>
</dbReference>
<dbReference type="SMART" id="SM01086">
    <property type="entry name" value="ClpB_D2-small"/>
    <property type="match status" value="1"/>
</dbReference>
<dbReference type="SMART" id="SM00994">
    <property type="entry name" value="zf-C4_ClpX"/>
    <property type="match status" value="1"/>
</dbReference>
<dbReference type="SUPFAM" id="SSF57716">
    <property type="entry name" value="Glucocorticoid receptor-like (DNA-binding domain)"/>
    <property type="match status" value="1"/>
</dbReference>
<dbReference type="SUPFAM" id="SSF52540">
    <property type="entry name" value="P-loop containing nucleoside triphosphate hydrolases"/>
    <property type="match status" value="1"/>
</dbReference>
<dbReference type="PROSITE" id="PS51902">
    <property type="entry name" value="CLPX_ZB"/>
    <property type="match status" value="1"/>
</dbReference>
<gene>
    <name evidence="1" type="primary">clpX</name>
    <name type="ordered locus">A1S_0477</name>
</gene>
<organism>
    <name type="scientific">Acinetobacter baumannii (strain ATCC 17978 / DSM 105126 / CIP 53.77 / LMG 1025 / NCDC KC755 / 5377)</name>
    <dbReference type="NCBI Taxonomy" id="400667"/>
    <lineage>
        <taxon>Bacteria</taxon>
        <taxon>Pseudomonadati</taxon>
        <taxon>Pseudomonadota</taxon>
        <taxon>Gammaproteobacteria</taxon>
        <taxon>Moraxellales</taxon>
        <taxon>Moraxellaceae</taxon>
        <taxon>Acinetobacter</taxon>
        <taxon>Acinetobacter calcoaceticus/baumannii complex</taxon>
    </lineage>
</organism>
<sequence length="437" mass="48083">MSEHPQGQKHCSFCGKTQSEVGKLIAGEDAYICNECVDVCLDLVQTSQQVEAGDWASKALPKPHEIRAALDQYVIGQDLAKKTLSVAVYNHYKRLKVGQSGHVSKDVEIAKSNILLIGPTGSGKTLLAQTLARLLDVPFAMADATTLTEAGYVGEDVENIVQKLLQKADYDVEKAQKGIIYIDEIDKITRKSENPSITRDVSGEGVQQALLKMIEGTVASIPPQGGRKHPQQEFIQIDTSNILFICGGAFAGLEKIVQQRQEKGGIGFTADVKNKDETKKLAELFRQVEPTDLVKFGLIPEFIGRLPVIATLEELDEEALMQILTEPKNALTRQYQYLFNMENVDLVFEDSALRAVAKRALERNTGARGLRSILENVLLETMYDLPSRTDVGTVFINEAVINGEAEPVYKSERQPKEAVTHESVAKADLKVIDSKSA</sequence>
<evidence type="ECO:0000255" key="1">
    <source>
        <dbReference type="HAMAP-Rule" id="MF_00175"/>
    </source>
</evidence>
<evidence type="ECO:0000255" key="2">
    <source>
        <dbReference type="PROSITE-ProRule" id="PRU01250"/>
    </source>
</evidence>
<name>CLPX_ACIBT</name>
<reference key="1">
    <citation type="journal article" date="2007" name="Genes Dev.">
        <title>New insights into Acinetobacter baumannii pathogenesis revealed by high-density pyrosequencing and transposon mutagenesis.</title>
        <authorList>
            <person name="Smith M.G."/>
            <person name="Gianoulis T.A."/>
            <person name="Pukatzki S."/>
            <person name="Mekalanos J.J."/>
            <person name="Ornston L.N."/>
            <person name="Gerstein M."/>
            <person name="Snyder M."/>
        </authorList>
    </citation>
    <scope>NUCLEOTIDE SEQUENCE [LARGE SCALE GENOMIC DNA]</scope>
    <source>
        <strain>ATCC 17978 / DSM 105126 / CIP 53.77 / LMG 1025 / NCDC KC755 / 5377</strain>
    </source>
</reference>
<comment type="function">
    <text evidence="1">ATP-dependent specificity component of the Clp protease. It directs the protease to specific substrates. Can perform chaperone functions in the absence of ClpP.</text>
</comment>
<comment type="subunit">
    <text evidence="1">Component of the ClpX-ClpP complex. Forms a hexameric ring that, in the presence of ATP, binds to fourteen ClpP subunits assembled into a disk-like structure with a central cavity, resembling the structure of eukaryotic proteasomes.</text>
</comment>
<comment type="similarity">
    <text evidence="1">Belongs to the ClpX chaperone family.</text>
</comment>
<accession>A3M1Y8</accession>
<protein>
    <recommendedName>
        <fullName evidence="1">ATP-dependent Clp protease ATP-binding subunit ClpX</fullName>
    </recommendedName>
</protein>
<proteinExistence type="inferred from homology"/>